<feature type="chain" id="PRO_1000142520" description="Large ribosomal subunit protein bL25">
    <location>
        <begin position="1"/>
        <end position="225"/>
    </location>
</feature>
<feature type="region of interest" description="Disordered" evidence="2">
    <location>
        <begin position="188"/>
        <end position="225"/>
    </location>
</feature>
<feature type="compositionally biased region" description="Acidic residues" evidence="2">
    <location>
        <begin position="204"/>
        <end position="217"/>
    </location>
</feature>
<gene>
    <name evidence="1" type="primary">rplY</name>
    <name evidence="1" type="synonym">ctc</name>
    <name type="ordered locus">Exig_1585</name>
</gene>
<protein>
    <recommendedName>
        <fullName evidence="1">Large ribosomal subunit protein bL25</fullName>
    </recommendedName>
    <alternativeName>
        <fullName evidence="3">50S ribosomal protein L25</fullName>
    </alternativeName>
    <alternativeName>
        <fullName evidence="1">General stress protein CTC</fullName>
    </alternativeName>
</protein>
<name>RL25_EXIS2</name>
<proteinExistence type="inferred from homology"/>
<keyword id="KW-1185">Reference proteome</keyword>
<keyword id="KW-0687">Ribonucleoprotein</keyword>
<keyword id="KW-0689">Ribosomal protein</keyword>
<keyword id="KW-0694">RNA-binding</keyword>
<keyword id="KW-0699">rRNA-binding</keyword>
<accession>B1YGY0</accession>
<evidence type="ECO:0000255" key="1">
    <source>
        <dbReference type="HAMAP-Rule" id="MF_01334"/>
    </source>
</evidence>
<evidence type="ECO:0000256" key="2">
    <source>
        <dbReference type="SAM" id="MobiDB-lite"/>
    </source>
</evidence>
<evidence type="ECO:0000305" key="3"/>
<comment type="function">
    <text evidence="1">This is one of the proteins that binds to the 5S RNA in the ribosome where it forms part of the central protuberance.</text>
</comment>
<comment type="subunit">
    <text evidence="1">Part of the 50S ribosomal subunit; part of the 5S rRNA/L5/L18/L25 subcomplex. Contacts the 5S rRNA. Binds to the 5S rRNA independently of L5 and L18.</text>
</comment>
<comment type="similarity">
    <text evidence="1">Belongs to the bacterial ribosomal protein bL25 family. CTC subfamily.</text>
</comment>
<organism>
    <name type="scientific">Exiguobacterium sibiricum (strain DSM 17290 / CCUG 55495 / CIP 109462 / JCM 13490 / 255-15)</name>
    <dbReference type="NCBI Taxonomy" id="262543"/>
    <lineage>
        <taxon>Bacteria</taxon>
        <taxon>Bacillati</taxon>
        <taxon>Bacillota</taxon>
        <taxon>Bacilli</taxon>
        <taxon>Bacillales</taxon>
        <taxon>Bacillales Family XII. Incertae Sedis</taxon>
        <taxon>Exiguobacterium</taxon>
    </lineage>
</organism>
<dbReference type="EMBL" id="CP001022">
    <property type="protein sequence ID" value="ACB61041.1"/>
    <property type="molecule type" value="Genomic_DNA"/>
</dbReference>
<dbReference type="RefSeq" id="WP_012370461.1">
    <property type="nucleotide sequence ID" value="NC_010556.1"/>
</dbReference>
<dbReference type="SMR" id="B1YGY0"/>
<dbReference type="STRING" id="262543.Exig_1585"/>
<dbReference type="KEGG" id="esi:Exig_1585"/>
<dbReference type="eggNOG" id="COG1825">
    <property type="taxonomic scope" value="Bacteria"/>
</dbReference>
<dbReference type="HOGENOM" id="CLU_075939_2_0_9"/>
<dbReference type="OrthoDB" id="9790002at2"/>
<dbReference type="Proteomes" id="UP000001681">
    <property type="component" value="Chromosome"/>
</dbReference>
<dbReference type="GO" id="GO:0022625">
    <property type="term" value="C:cytosolic large ribosomal subunit"/>
    <property type="evidence" value="ECO:0007669"/>
    <property type="project" value="TreeGrafter"/>
</dbReference>
<dbReference type="GO" id="GO:0008097">
    <property type="term" value="F:5S rRNA binding"/>
    <property type="evidence" value="ECO:0007669"/>
    <property type="project" value="InterPro"/>
</dbReference>
<dbReference type="GO" id="GO:0003735">
    <property type="term" value="F:structural constituent of ribosome"/>
    <property type="evidence" value="ECO:0007669"/>
    <property type="project" value="InterPro"/>
</dbReference>
<dbReference type="GO" id="GO:0006412">
    <property type="term" value="P:translation"/>
    <property type="evidence" value="ECO:0007669"/>
    <property type="project" value="UniProtKB-UniRule"/>
</dbReference>
<dbReference type="CDD" id="cd00495">
    <property type="entry name" value="Ribosomal_L25_TL5_CTC"/>
    <property type="match status" value="1"/>
</dbReference>
<dbReference type="Gene3D" id="2.170.120.20">
    <property type="entry name" value="Ribosomal protein L25, beta domain"/>
    <property type="match status" value="1"/>
</dbReference>
<dbReference type="Gene3D" id="2.40.240.10">
    <property type="entry name" value="Ribosomal Protein L25, Chain P"/>
    <property type="match status" value="1"/>
</dbReference>
<dbReference type="HAMAP" id="MF_01334">
    <property type="entry name" value="Ribosomal_bL25_CTC"/>
    <property type="match status" value="1"/>
</dbReference>
<dbReference type="InterPro" id="IPR020056">
    <property type="entry name" value="Rbsml_bL25/Gln-tRNA_synth_N"/>
</dbReference>
<dbReference type="InterPro" id="IPR011035">
    <property type="entry name" value="Ribosomal_bL25/Gln-tRNA_synth"/>
</dbReference>
<dbReference type="InterPro" id="IPR020057">
    <property type="entry name" value="Ribosomal_bL25_b-dom"/>
</dbReference>
<dbReference type="InterPro" id="IPR037121">
    <property type="entry name" value="Ribosomal_bL25_C"/>
</dbReference>
<dbReference type="InterPro" id="IPR001021">
    <property type="entry name" value="Ribosomal_bL25_long"/>
</dbReference>
<dbReference type="InterPro" id="IPR029751">
    <property type="entry name" value="Ribosomal_L25_dom"/>
</dbReference>
<dbReference type="InterPro" id="IPR020930">
    <property type="entry name" value="Ribosomal_uL5_bac-type"/>
</dbReference>
<dbReference type="NCBIfam" id="TIGR00731">
    <property type="entry name" value="bL25_bact_ctc"/>
    <property type="match status" value="1"/>
</dbReference>
<dbReference type="NCBIfam" id="NF004133">
    <property type="entry name" value="PRK05618.2-4"/>
    <property type="match status" value="1"/>
</dbReference>
<dbReference type="PANTHER" id="PTHR33284">
    <property type="entry name" value="RIBOSOMAL PROTEIN L25/GLN-TRNA SYNTHETASE, ANTI-CODON-BINDING DOMAIN-CONTAINING PROTEIN"/>
    <property type="match status" value="1"/>
</dbReference>
<dbReference type="PANTHER" id="PTHR33284:SF1">
    <property type="entry name" value="RIBOSOMAL PROTEIN L25_GLN-TRNA SYNTHETASE, ANTI-CODON-BINDING DOMAIN-CONTAINING PROTEIN"/>
    <property type="match status" value="1"/>
</dbReference>
<dbReference type="Pfam" id="PF01386">
    <property type="entry name" value="Ribosomal_L25p"/>
    <property type="match status" value="1"/>
</dbReference>
<dbReference type="Pfam" id="PF14693">
    <property type="entry name" value="Ribosomal_TL5_C"/>
    <property type="match status" value="1"/>
</dbReference>
<dbReference type="SUPFAM" id="SSF50715">
    <property type="entry name" value="Ribosomal protein L25-like"/>
    <property type="match status" value="1"/>
</dbReference>
<reference key="1">
    <citation type="submission" date="2008-04" db="EMBL/GenBank/DDBJ databases">
        <title>Complete sequence of chromosome of Exiguobacterium sibiricum 255-15.</title>
        <authorList>
            <consortium name="US DOE Joint Genome Institute"/>
            <person name="Copeland A."/>
            <person name="Lucas S."/>
            <person name="Lapidus A."/>
            <person name="Glavina del Rio T."/>
            <person name="Dalin E."/>
            <person name="Tice H."/>
            <person name="Bruce D."/>
            <person name="Goodwin L."/>
            <person name="Pitluck S."/>
            <person name="Kiss H."/>
            <person name="Chertkov O."/>
            <person name="Monk C."/>
            <person name="Brettin T."/>
            <person name="Detter J.C."/>
            <person name="Han C."/>
            <person name="Kuske C.R."/>
            <person name="Schmutz J."/>
            <person name="Larimer F."/>
            <person name="Land M."/>
            <person name="Hauser L."/>
            <person name="Kyrpides N."/>
            <person name="Mikhailova N."/>
            <person name="Vishnivetskaya T."/>
            <person name="Rodrigues D.F."/>
            <person name="Gilichinsky D."/>
            <person name="Tiedje J."/>
            <person name="Richardson P."/>
        </authorList>
    </citation>
    <scope>NUCLEOTIDE SEQUENCE [LARGE SCALE GENOMIC DNA]</scope>
    <source>
        <strain>DSM 17290 / CCUG 55495 / CIP 109462 / JCM 13490 / 255-15</strain>
    </source>
</reference>
<sequence>MSVTLKVEEREVRPRSLRKQLRHEGKALGVVYGYKVESTPISFDEKELVKVIRDHGENVLVALQIGGKKVNTLINKLDMDIFTPTIKHVEFIAVKMDEETEVETDIVLVGEAAGAKLGGFLSQTLFKVTVAATPDKLPERIEVDVTELAIGDSITVADLPEEKDFRVVTEGDIQVAAVVESTLEAELEEIEEAEAEAQATDADTATDDSEQTSEEQAEENKEDKE</sequence>